<feature type="chain" id="PRO_0000100957" description="Threonine--tRNA ligase">
    <location>
        <begin position="1"/>
        <end position="655"/>
    </location>
</feature>
<feature type="domain" description="TGS" evidence="2">
    <location>
        <begin position="1"/>
        <end position="66"/>
    </location>
</feature>
<feature type="region of interest" description="Catalytic" evidence="1">
    <location>
        <begin position="248"/>
        <end position="540"/>
    </location>
</feature>
<feature type="binding site" evidence="1">
    <location>
        <position position="340"/>
    </location>
    <ligand>
        <name>Zn(2+)</name>
        <dbReference type="ChEBI" id="CHEBI:29105"/>
    </ligand>
</feature>
<feature type="binding site" evidence="1">
    <location>
        <position position="391"/>
    </location>
    <ligand>
        <name>Zn(2+)</name>
        <dbReference type="ChEBI" id="CHEBI:29105"/>
    </ligand>
</feature>
<feature type="binding site" evidence="1">
    <location>
        <position position="517"/>
    </location>
    <ligand>
        <name>Zn(2+)</name>
        <dbReference type="ChEBI" id="CHEBI:29105"/>
    </ligand>
</feature>
<sequence length="655" mass="73720">MIDLVFPDGSSRQYPDGATGRDVAAAISKSLEKKALLIKLDGQVLDLDRRLTPDLLTGERKFEILTREAPEALDTIRHDTAHVLAEAVQELFPGTQVTIGPNVEDGFYYDFARDEPFSLDDLEKIEKRMKEIVDRDEKITREVWDRNEAIAHFDGIGEQYKAQIIRDLPDTDTITVYRQGNWKDLCRGPHLPSTKHVGKAFKLTKLAGAYWRGDQNNAQLQRIYGTAWASEADLEAHLKRIEEAEKRDHRKLGKTMDLFHIQEEGKGMVFWHPKGWALYRVLEDYMRRRLDAAGYKEVKTPQILDRSLWEKSGHAEKFGHAMFMCESAEGEVLAVKPMNCPGHIQIFNVGQKSYRELPLRMAEFGACHRYEPSGAMHGIMRVRAFTQDDAHIFCREEQVTEESARFIELLRSVYNDLGMTLADTKFSTRPELRAGTDETWDKAEAALAAAAEAAGETLTLQPGEGAFYGPKLEFSLKDAIGRVWQCGTLQLDFVLPERLDAEYVSEDGSKKRPVMLHRAILGSFERFIGILLENFAGALPVWLAPTQVVVATITSDADDYAREVVEKLTKLGMRAELDLRNEKINYKIREHSLAKVPVIAVVGRKEAETGQLALRRLGGEGQSVLSLEEALRVLKSDATPPDVARALAVQEAVTA</sequence>
<proteinExistence type="inferred from homology"/>
<reference key="1">
    <citation type="journal article" date="2001" name="Proc. Natl. Acad. Sci. U.S.A.">
        <title>Complete genome sequence of Caulobacter crescentus.</title>
        <authorList>
            <person name="Nierman W.C."/>
            <person name="Feldblyum T.V."/>
            <person name="Laub M.T."/>
            <person name="Paulsen I.T."/>
            <person name="Nelson K.E."/>
            <person name="Eisen J.A."/>
            <person name="Heidelberg J.F."/>
            <person name="Alley M.R.K."/>
            <person name="Ohta N."/>
            <person name="Maddock J.R."/>
            <person name="Potocka I."/>
            <person name="Nelson W.C."/>
            <person name="Newton A."/>
            <person name="Stephens C."/>
            <person name="Phadke N.D."/>
            <person name="Ely B."/>
            <person name="DeBoy R.T."/>
            <person name="Dodson R.J."/>
            <person name="Durkin A.S."/>
            <person name="Gwinn M.L."/>
            <person name="Haft D.H."/>
            <person name="Kolonay J.F."/>
            <person name="Smit J."/>
            <person name="Craven M.B."/>
            <person name="Khouri H.M."/>
            <person name="Shetty J."/>
            <person name="Berry K.J."/>
            <person name="Utterback T.R."/>
            <person name="Tran K."/>
            <person name="Wolf A.M."/>
            <person name="Vamathevan J.J."/>
            <person name="Ermolaeva M.D."/>
            <person name="White O."/>
            <person name="Salzberg S.L."/>
            <person name="Venter J.C."/>
            <person name="Shapiro L."/>
            <person name="Fraser C.M."/>
        </authorList>
    </citation>
    <scope>NUCLEOTIDE SEQUENCE [LARGE SCALE GENOMIC DNA]</scope>
    <source>
        <strain>ATCC 19089 / CIP 103742 / CB 15</strain>
    </source>
</reference>
<protein>
    <recommendedName>
        <fullName evidence="1">Threonine--tRNA ligase</fullName>
        <ecNumber evidence="1">6.1.1.3</ecNumber>
    </recommendedName>
    <alternativeName>
        <fullName evidence="1">Threonyl-tRNA synthetase</fullName>
        <shortName evidence="1">ThrRS</shortName>
    </alternativeName>
</protein>
<gene>
    <name evidence="1" type="primary">thrS</name>
    <name type="ordered locus">CC_0464</name>
</gene>
<comment type="function">
    <text evidence="1">Catalyzes the attachment of threonine to tRNA(Thr) in a two-step reaction: L-threonine is first activated by ATP to form Thr-AMP and then transferred to the acceptor end of tRNA(Thr). Also edits incorrectly charged L-seryl-tRNA(Thr).</text>
</comment>
<comment type="catalytic activity">
    <reaction evidence="1">
        <text>tRNA(Thr) + L-threonine + ATP = L-threonyl-tRNA(Thr) + AMP + diphosphate + H(+)</text>
        <dbReference type="Rhea" id="RHEA:24624"/>
        <dbReference type="Rhea" id="RHEA-COMP:9670"/>
        <dbReference type="Rhea" id="RHEA-COMP:9704"/>
        <dbReference type="ChEBI" id="CHEBI:15378"/>
        <dbReference type="ChEBI" id="CHEBI:30616"/>
        <dbReference type="ChEBI" id="CHEBI:33019"/>
        <dbReference type="ChEBI" id="CHEBI:57926"/>
        <dbReference type="ChEBI" id="CHEBI:78442"/>
        <dbReference type="ChEBI" id="CHEBI:78534"/>
        <dbReference type="ChEBI" id="CHEBI:456215"/>
        <dbReference type="EC" id="6.1.1.3"/>
    </reaction>
</comment>
<comment type="cofactor">
    <cofactor evidence="1">
        <name>Zn(2+)</name>
        <dbReference type="ChEBI" id="CHEBI:29105"/>
    </cofactor>
    <text evidence="1">Binds 1 zinc ion per subunit.</text>
</comment>
<comment type="subunit">
    <text evidence="1">Homodimer.</text>
</comment>
<comment type="subcellular location">
    <subcellularLocation>
        <location evidence="1">Cytoplasm</location>
    </subcellularLocation>
</comment>
<comment type="similarity">
    <text evidence="1">Belongs to the class-II aminoacyl-tRNA synthetase family.</text>
</comment>
<organism>
    <name type="scientific">Caulobacter vibrioides (strain ATCC 19089 / CIP 103742 / CB 15)</name>
    <name type="common">Caulobacter crescentus</name>
    <dbReference type="NCBI Taxonomy" id="190650"/>
    <lineage>
        <taxon>Bacteria</taxon>
        <taxon>Pseudomonadati</taxon>
        <taxon>Pseudomonadota</taxon>
        <taxon>Alphaproteobacteria</taxon>
        <taxon>Caulobacterales</taxon>
        <taxon>Caulobacteraceae</taxon>
        <taxon>Caulobacter</taxon>
    </lineage>
</organism>
<dbReference type="EC" id="6.1.1.3" evidence="1"/>
<dbReference type="EMBL" id="AE005673">
    <property type="protein sequence ID" value="AAK22451.1"/>
    <property type="molecule type" value="Genomic_DNA"/>
</dbReference>
<dbReference type="PIR" id="G87306">
    <property type="entry name" value="G87306"/>
</dbReference>
<dbReference type="RefSeq" id="NP_419283.1">
    <property type="nucleotide sequence ID" value="NC_002696.2"/>
</dbReference>
<dbReference type="RefSeq" id="WP_010918352.1">
    <property type="nucleotide sequence ID" value="NC_002696.2"/>
</dbReference>
<dbReference type="SMR" id="Q9AAX8"/>
<dbReference type="STRING" id="190650.CC_0464"/>
<dbReference type="EnsemblBacteria" id="AAK22451">
    <property type="protein sequence ID" value="AAK22451"/>
    <property type="gene ID" value="CC_0464"/>
</dbReference>
<dbReference type="KEGG" id="ccr:CC_0464"/>
<dbReference type="PATRIC" id="fig|190650.5.peg.470"/>
<dbReference type="eggNOG" id="COG0441">
    <property type="taxonomic scope" value="Bacteria"/>
</dbReference>
<dbReference type="HOGENOM" id="CLU_008554_0_1_5"/>
<dbReference type="BioCyc" id="CAULO:CC0464-MONOMER"/>
<dbReference type="Proteomes" id="UP000001816">
    <property type="component" value="Chromosome"/>
</dbReference>
<dbReference type="GO" id="GO:0005737">
    <property type="term" value="C:cytoplasm"/>
    <property type="evidence" value="ECO:0007669"/>
    <property type="project" value="UniProtKB-SubCell"/>
</dbReference>
<dbReference type="GO" id="GO:0005524">
    <property type="term" value="F:ATP binding"/>
    <property type="evidence" value="ECO:0007669"/>
    <property type="project" value="UniProtKB-UniRule"/>
</dbReference>
<dbReference type="GO" id="GO:0046872">
    <property type="term" value="F:metal ion binding"/>
    <property type="evidence" value="ECO:0007669"/>
    <property type="project" value="UniProtKB-KW"/>
</dbReference>
<dbReference type="GO" id="GO:0004829">
    <property type="term" value="F:threonine-tRNA ligase activity"/>
    <property type="evidence" value="ECO:0007669"/>
    <property type="project" value="UniProtKB-UniRule"/>
</dbReference>
<dbReference type="GO" id="GO:0000049">
    <property type="term" value="F:tRNA binding"/>
    <property type="evidence" value="ECO:0007669"/>
    <property type="project" value="UniProtKB-KW"/>
</dbReference>
<dbReference type="GO" id="GO:0006435">
    <property type="term" value="P:threonyl-tRNA aminoacylation"/>
    <property type="evidence" value="ECO:0007669"/>
    <property type="project" value="UniProtKB-UniRule"/>
</dbReference>
<dbReference type="CDD" id="cd01667">
    <property type="entry name" value="TGS_ThrRS"/>
    <property type="match status" value="1"/>
</dbReference>
<dbReference type="CDD" id="cd00860">
    <property type="entry name" value="ThrRS_anticodon"/>
    <property type="match status" value="1"/>
</dbReference>
<dbReference type="CDD" id="cd00771">
    <property type="entry name" value="ThrRS_core"/>
    <property type="match status" value="1"/>
</dbReference>
<dbReference type="FunFam" id="3.30.54.20:FF:000002">
    <property type="entry name" value="Threonine--tRNA ligase"/>
    <property type="match status" value="1"/>
</dbReference>
<dbReference type="FunFam" id="3.30.930.10:FF:000002">
    <property type="entry name" value="Threonine--tRNA ligase"/>
    <property type="match status" value="1"/>
</dbReference>
<dbReference type="FunFam" id="3.40.50.800:FF:000001">
    <property type="entry name" value="Threonine--tRNA ligase"/>
    <property type="match status" value="1"/>
</dbReference>
<dbReference type="FunFam" id="3.30.980.10:FF:000005">
    <property type="entry name" value="Threonyl-tRNA synthetase, mitochondrial"/>
    <property type="match status" value="1"/>
</dbReference>
<dbReference type="Gene3D" id="3.10.20.30">
    <property type="match status" value="1"/>
</dbReference>
<dbReference type="Gene3D" id="3.30.54.20">
    <property type="match status" value="1"/>
</dbReference>
<dbReference type="Gene3D" id="3.40.50.800">
    <property type="entry name" value="Anticodon-binding domain"/>
    <property type="match status" value="1"/>
</dbReference>
<dbReference type="Gene3D" id="3.30.930.10">
    <property type="entry name" value="Bira Bifunctional Protein, Domain 2"/>
    <property type="match status" value="1"/>
</dbReference>
<dbReference type="Gene3D" id="3.30.980.10">
    <property type="entry name" value="Threonyl-trna Synthetase, Chain A, domain 2"/>
    <property type="match status" value="1"/>
</dbReference>
<dbReference type="HAMAP" id="MF_00184">
    <property type="entry name" value="Thr_tRNA_synth"/>
    <property type="match status" value="1"/>
</dbReference>
<dbReference type="InterPro" id="IPR002314">
    <property type="entry name" value="aa-tRNA-synt_IIb"/>
</dbReference>
<dbReference type="InterPro" id="IPR006195">
    <property type="entry name" value="aa-tRNA-synth_II"/>
</dbReference>
<dbReference type="InterPro" id="IPR045864">
    <property type="entry name" value="aa-tRNA-synth_II/BPL/LPL"/>
</dbReference>
<dbReference type="InterPro" id="IPR004154">
    <property type="entry name" value="Anticodon-bd"/>
</dbReference>
<dbReference type="InterPro" id="IPR036621">
    <property type="entry name" value="Anticodon-bd_dom_sf"/>
</dbReference>
<dbReference type="InterPro" id="IPR012675">
    <property type="entry name" value="Beta-grasp_dom_sf"/>
</dbReference>
<dbReference type="InterPro" id="IPR004095">
    <property type="entry name" value="TGS"/>
</dbReference>
<dbReference type="InterPro" id="IPR012676">
    <property type="entry name" value="TGS-like"/>
</dbReference>
<dbReference type="InterPro" id="IPR002320">
    <property type="entry name" value="Thr-tRNA-ligase_IIa"/>
</dbReference>
<dbReference type="InterPro" id="IPR018163">
    <property type="entry name" value="Thr/Ala-tRNA-synth_IIc_edit"/>
</dbReference>
<dbReference type="InterPro" id="IPR047246">
    <property type="entry name" value="ThrRS_anticodon"/>
</dbReference>
<dbReference type="InterPro" id="IPR033728">
    <property type="entry name" value="ThrRS_core"/>
</dbReference>
<dbReference type="InterPro" id="IPR012947">
    <property type="entry name" value="tRNA_SAD"/>
</dbReference>
<dbReference type="NCBIfam" id="TIGR00418">
    <property type="entry name" value="thrS"/>
    <property type="match status" value="1"/>
</dbReference>
<dbReference type="PANTHER" id="PTHR11451:SF44">
    <property type="entry name" value="THREONINE--TRNA LIGASE, CHLOROPLASTIC_MITOCHONDRIAL 2"/>
    <property type="match status" value="1"/>
</dbReference>
<dbReference type="PANTHER" id="PTHR11451">
    <property type="entry name" value="THREONINE-TRNA LIGASE"/>
    <property type="match status" value="1"/>
</dbReference>
<dbReference type="Pfam" id="PF03129">
    <property type="entry name" value="HGTP_anticodon"/>
    <property type="match status" value="1"/>
</dbReference>
<dbReference type="Pfam" id="PF02824">
    <property type="entry name" value="TGS"/>
    <property type="match status" value="1"/>
</dbReference>
<dbReference type="Pfam" id="PF00587">
    <property type="entry name" value="tRNA-synt_2b"/>
    <property type="match status" value="1"/>
</dbReference>
<dbReference type="Pfam" id="PF07973">
    <property type="entry name" value="tRNA_SAD"/>
    <property type="match status" value="1"/>
</dbReference>
<dbReference type="PRINTS" id="PR01047">
    <property type="entry name" value="TRNASYNTHTHR"/>
</dbReference>
<dbReference type="SMART" id="SM00863">
    <property type="entry name" value="tRNA_SAD"/>
    <property type="match status" value="1"/>
</dbReference>
<dbReference type="SUPFAM" id="SSF52954">
    <property type="entry name" value="Class II aaRS ABD-related"/>
    <property type="match status" value="1"/>
</dbReference>
<dbReference type="SUPFAM" id="SSF55681">
    <property type="entry name" value="Class II aaRS and biotin synthetases"/>
    <property type="match status" value="1"/>
</dbReference>
<dbReference type="SUPFAM" id="SSF81271">
    <property type="entry name" value="TGS-like"/>
    <property type="match status" value="1"/>
</dbReference>
<dbReference type="SUPFAM" id="SSF55186">
    <property type="entry name" value="ThrRS/AlaRS common domain"/>
    <property type="match status" value="1"/>
</dbReference>
<dbReference type="PROSITE" id="PS50862">
    <property type="entry name" value="AA_TRNA_LIGASE_II"/>
    <property type="match status" value="1"/>
</dbReference>
<dbReference type="PROSITE" id="PS51880">
    <property type="entry name" value="TGS"/>
    <property type="match status" value="1"/>
</dbReference>
<accession>Q9AAX8</accession>
<name>SYT_CAUVC</name>
<evidence type="ECO:0000255" key="1">
    <source>
        <dbReference type="HAMAP-Rule" id="MF_00184"/>
    </source>
</evidence>
<evidence type="ECO:0000255" key="2">
    <source>
        <dbReference type="PROSITE-ProRule" id="PRU01228"/>
    </source>
</evidence>
<keyword id="KW-0030">Aminoacyl-tRNA synthetase</keyword>
<keyword id="KW-0067">ATP-binding</keyword>
<keyword id="KW-0963">Cytoplasm</keyword>
<keyword id="KW-0436">Ligase</keyword>
<keyword id="KW-0479">Metal-binding</keyword>
<keyword id="KW-0547">Nucleotide-binding</keyword>
<keyword id="KW-0648">Protein biosynthesis</keyword>
<keyword id="KW-1185">Reference proteome</keyword>
<keyword id="KW-0694">RNA-binding</keyword>
<keyword id="KW-0820">tRNA-binding</keyword>
<keyword id="KW-0862">Zinc</keyword>